<dbReference type="EC" id="3.5.2.7" evidence="1"/>
<dbReference type="EMBL" id="CP000316">
    <property type="protein sequence ID" value="ABE42988.1"/>
    <property type="molecule type" value="Genomic_DNA"/>
</dbReference>
<dbReference type="RefSeq" id="WP_011481990.1">
    <property type="nucleotide sequence ID" value="NC_007948.1"/>
</dbReference>
<dbReference type="SMR" id="Q12EQ4"/>
<dbReference type="STRING" id="296591.Bpro_1035"/>
<dbReference type="KEGG" id="pol:Bpro_1035"/>
<dbReference type="eggNOG" id="COG1228">
    <property type="taxonomic scope" value="Bacteria"/>
</dbReference>
<dbReference type="HOGENOM" id="CLU_041647_0_0_4"/>
<dbReference type="OrthoDB" id="9776455at2"/>
<dbReference type="UniPathway" id="UPA00379">
    <property type="reaction ID" value="UER00551"/>
</dbReference>
<dbReference type="Proteomes" id="UP000001983">
    <property type="component" value="Chromosome"/>
</dbReference>
<dbReference type="GO" id="GO:0005737">
    <property type="term" value="C:cytoplasm"/>
    <property type="evidence" value="ECO:0007669"/>
    <property type="project" value="UniProtKB-SubCell"/>
</dbReference>
<dbReference type="GO" id="GO:0050480">
    <property type="term" value="F:imidazolonepropionase activity"/>
    <property type="evidence" value="ECO:0007669"/>
    <property type="project" value="UniProtKB-UniRule"/>
</dbReference>
<dbReference type="GO" id="GO:0005506">
    <property type="term" value="F:iron ion binding"/>
    <property type="evidence" value="ECO:0007669"/>
    <property type="project" value="UniProtKB-UniRule"/>
</dbReference>
<dbReference type="GO" id="GO:0008270">
    <property type="term" value="F:zinc ion binding"/>
    <property type="evidence" value="ECO:0007669"/>
    <property type="project" value="UniProtKB-UniRule"/>
</dbReference>
<dbReference type="GO" id="GO:0019556">
    <property type="term" value="P:L-histidine catabolic process to glutamate and formamide"/>
    <property type="evidence" value="ECO:0007669"/>
    <property type="project" value="UniProtKB-UniPathway"/>
</dbReference>
<dbReference type="GO" id="GO:0019557">
    <property type="term" value="P:L-histidine catabolic process to glutamate and formate"/>
    <property type="evidence" value="ECO:0007669"/>
    <property type="project" value="UniProtKB-UniPathway"/>
</dbReference>
<dbReference type="CDD" id="cd01296">
    <property type="entry name" value="Imidazolone-5PH"/>
    <property type="match status" value="1"/>
</dbReference>
<dbReference type="FunFam" id="3.20.20.140:FF:000007">
    <property type="entry name" value="Imidazolonepropionase"/>
    <property type="match status" value="1"/>
</dbReference>
<dbReference type="Gene3D" id="3.20.20.140">
    <property type="entry name" value="Metal-dependent hydrolases"/>
    <property type="match status" value="1"/>
</dbReference>
<dbReference type="Gene3D" id="2.30.40.10">
    <property type="entry name" value="Urease, subunit C, domain 1"/>
    <property type="match status" value="1"/>
</dbReference>
<dbReference type="HAMAP" id="MF_00372">
    <property type="entry name" value="HutI"/>
    <property type="match status" value="1"/>
</dbReference>
<dbReference type="InterPro" id="IPR006680">
    <property type="entry name" value="Amidohydro-rel"/>
</dbReference>
<dbReference type="InterPro" id="IPR005920">
    <property type="entry name" value="HutI"/>
</dbReference>
<dbReference type="InterPro" id="IPR011059">
    <property type="entry name" value="Metal-dep_hydrolase_composite"/>
</dbReference>
<dbReference type="InterPro" id="IPR032466">
    <property type="entry name" value="Metal_Hydrolase"/>
</dbReference>
<dbReference type="NCBIfam" id="TIGR01224">
    <property type="entry name" value="hutI"/>
    <property type="match status" value="1"/>
</dbReference>
<dbReference type="PANTHER" id="PTHR42752">
    <property type="entry name" value="IMIDAZOLONEPROPIONASE"/>
    <property type="match status" value="1"/>
</dbReference>
<dbReference type="PANTHER" id="PTHR42752:SF1">
    <property type="entry name" value="IMIDAZOLONEPROPIONASE-RELATED"/>
    <property type="match status" value="1"/>
</dbReference>
<dbReference type="Pfam" id="PF01979">
    <property type="entry name" value="Amidohydro_1"/>
    <property type="match status" value="1"/>
</dbReference>
<dbReference type="SUPFAM" id="SSF51338">
    <property type="entry name" value="Composite domain of metallo-dependent hydrolases"/>
    <property type="match status" value="1"/>
</dbReference>
<dbReference type="SUPFAM" id="SSF51556">
    <property type="entry name" value="Metallo-dependent hydrolases"/>
    <property type="match status" value="1"/>
</dbReference>
<accession>Q12EQ4</accession>
<protein>
    <recommendedName>
        <fullName evidence="1">Imidazolonepropionase</fullName>
        <ecNumber evidence="1">3.5.2.7</ecNumber>
    </recommendedName>
    <alternativeName>
        <fullName evidence="1">Imidazolone-5-propionate hydrolase</fullName>
    </alternativeName>
</protein>
<comment type="function">
    <text evidence="1">Catalyzes the hydrolytic cleavage of the carbon-nitrogen bond in imidazolone-5-propanoate to yield N-formimidoyl-L-glutamate. It is the third step in the universal histidine degradation pathway.</text>
</comment>
<comment type="catalytic activity">
    <reaction evidence="1">
        <text>4-imidazolone-5-propanoate + H2O = N-formimidoyl-L-glutamate</text>
        <dbReference type="Rhea" id="RHEA:23660"/>
        <dbReference type="ChEBI" id="CHEBI:15377"/>
        <dbReference type="ChEBI" id="CHEBI:58928"/>
        <dbReference type="ChEBI" id="CHEBI:77893"/>
        <dbReference type="EC" id="3.5.2.7"/>
    </reaction>
</comment>
<comment type="cofactor">
    <cofactor evidence="1">
        <name>Zn(2+)</name>
        <dbReference type="ChEBI" id="CHEBI:29105"/>
    </cofactor>
    <cofactor evidence="1">
        <name>Fe(3+)</name>
        <dbReference type="ChEBI" id="CHEBI:29034"/>
    </cofactor>
    <text evidence="1">Binds 1 zinc or iron ion per subunit.</text>
</comment>
<comment type="pathway">
    <text evidence="1">Amino-acid degradation; L-histidine degradation into L-glutamate; N-formimidoyl-L-glutamate from L-histidine: step 3/3.</text>
</comment>
<comment type="subcellular location">
    <subcellularLocation>
        <location evidence="1">Cytoplasm</location>
    </subcellularLocation>
</comment>
<comment type="similarity">
    <text evidence="1">Belongs to the metallo-dependent hydrolases superfamily. HutI family.</text>
</comment>
<gene>
    <name evidence="1" type="primary">hutI</name>
    <name type="ordered locus">Bpro_1035</name>
</gene>
<organism>
    <name type="scientific">Polaromonas sp. (strain JS666 / ATCC BAA-500)</name>
    <dbReference type="NCBI Taxonomy" id="296591"/>
    <lineage>
        <taxon>Bacteria</taxon>
        <taxon>Pseudomonadati</taxon>
        <taxon>Pseudomonadota</taxon>
        <taxon>Betaproteobacteria</taxon>
        <taxon>Burkholderiales</taxon>
        <taxon>Comamonadaceae</taxon>
        <taxon>Polaromonas</taxon>
    </lineage>
</organism>
<reference key="1">
    <citation type="journal article" date="2008" name="Appl. Environ. Microbiol.">
        <title>The genome of Polaromonas sp. strain JS666: insights into the evolution of a hydrocarbon- and xenobiotic-degrading bacterium, and features of relevance to biotechnology.</title>
        <authorList>
            <person name="Mattes T.E."/>
            <person name="Alexander A.K."/>
            <person name="Richardson P.M."/>
            <person name="Munk A.C."/>
            <person name="Han C.S."/>
            <person name="Stothard P."/>
            <person name="Coleman N.V."/>
        </authorList>
    </citation>
    <scope>NUCLEOTIDE SEQUENCE [LARGE SCALE GENOMIC DNA]</scope>
    <source>
        <strain>JS666 / ATCC BAA-500</strain>
    </source>
</reference>
<proteinExistence type="inferred from homology"/>
<evidence type="ECO:0000255" key="1">
    <source>
        <dbReference type="HAMAP-Rule" id="MF_00372"/>
    </source>
</evidence>
<name>HUTI_POLSJ</name>
<sequence>MTTAPHPAADGIWEHLRLMPGALADDSPVATNTEAAIVVTEGRIRWIGASAALPAGFSALPRFDGGGALVTPGLVDCHTHLVYGGQRANEFAMRLAGASYEEVAKAGGGIVSSVRATRAAGEDELFAQAAPRLEQLLADGVCAIEIKSGYGLALEHERKQLRVARRLGEAYGVTVRTTFLGAHALPPEYAGRSQDYIDLVCREMLPALAAEGLVDAVDVFCERIAFSLSETEQVFQAAQRLGLPVKLHAEQLSDMGGAALAARYGALSCDHIEHLSQAGIDAMRAAGTVAVLLPGAYYTLRDTHLPPIAALREAGVPMAVSTDHNPGTSPALSLLLMANMACTLFRLTVPEALAGITRHAARALGLQDTHGALGVGRPANFVLWQLNDSAELAYWLGQQAPRTIVRQGRVALDGLQIAPNARITP</sequence>
<feature type="chain" id="PRO_0000306481" description="Imidazolonepropionase">
    <location>
        <begin position="1"/>
        <end position="425"/>
    </location>
</feature>
<feature type="binding site" evidence="1">
    <location>
        <position position="78"/>
    </location>
    <ligand>
        <name>Fe(3+)</name>
        <dbReference type="ChEBI" id="CHEBI:29034"/>
    </ligand>
</feature>
<feature type="binding site" evidence="1">
    <location>
        <position position="78"/>
    </location>
    <ligand>
        <name>Zn(2+)</name>
        <dbReference type="ChEBI" id="CHEBI:29105"/>
    </ligand>
</feature>
<feature type="binding site" evidence="1">
    <location>
        <position position="80"/>
    </location>
    <ligand>
        <name>Fe(3+)</name>
        <dbReference type="ChEBI" id="CHEBI:29034"/>
    </ligand>
</feature>
<feature type="binding site" evidence="1">
    <location>
        <position position="80"/>
    </location>
    <ligand>
        <name>Zn(2+)</name>
        <dbReference type="ChEBI" id="CHEBI:29105"/>
    </ligand>
</feature>
<feature type="binding site" evidence="1">
    <location>
        <position position="87"/>
    </location>
    <ligand>
        <name>4-imidazolone-5-propanoate</name>
        <dbReference type="ChEBI" id="CHEBI:77893"/>
    </ligand>
</feature>
<feature type="binding site" evidence="1">
    <location>
        <position position="150"/>
    </location>
    <ligand>
        <name>4-imidazolone-5-propanoate</name>
        <dbReference type="ChEBI" id="CHEBI:77893"/>
    </ligand>
</feature>
<feature type="binding site" evidence="1">
    <location>
        <position position="150"/>
    </location>
    <ligand>
        <name>N-formimidoyl-L-glutamate</name>
        <dbReference type="ChEBI" id="CHEBI:58928"/>
    </ligand>
</feature>
<feature type="binding site" evidence="1">
    <location>
        <position position="183"/>
    </location>
    <ligand>
        <name>4-imidazolone-5-propanoate</name>
        <dbReference type="ChEBI" id="CHEBI:77893"/>
    </ligand>
</feature>
<feature type="binding site" evidence="1">
    <location>
        <position position="248"/>
    </location>
    <ligand>
        <name>Fe(3+)</name>
        <dbReference type="ChEBI" id="CHEBI:29034"/>
    </ligand>
</feature>
<feature type="binding site" evidence="1">
    <location>
        <position position="248"/>
    </location>
    <ligand>
        <name>Zn(2+)</name>
        <dbReference type="ChEBI" id="CHEBI:29105"/>
    </ligand>
</feature>
<feature type="binding site" evidence="1">
    <location>
        <position position="251"/>
    </location>
    <ligand>
        <name>4-imidazolone-5-propanoate</name>
        <dbReference type="ChEBI" id="CHEBI:77893"/>
    </ligand>
</feature>
<feature type="binding site" evidence="1">
    <location>
        <position position="323"/>
    </location>
    <ligand>
        <name>Fe(3+)</name>
        <dbReference type="ChEBI" id="CHEBI:29034"/>
    </ligand>
</feature>
<feature type="binding site" evidence="1">
    <location>
        <position position="323"/>
    </location>
    <ligand>
        <name>Zn(2+)</name>
        <dbReference type="ChEBI" id="CHEBI:29105"/>
    </ligand>
</feature>
<feature type="binding site" evidence="1">
    <location>
        <position position="325"/>
    </location>
    <ligand>
        <name>N-formimidoyl-L-glutamate</name>
        <dbReference type="ChEBI" id="CHEBI:58928"/>
    </ligand>
</feature>
<feature type="binding site" evidence="1">
    <location>
        <position position="327"/>
    </location>
    <ligand>
        <name>N-formimidoyl-L-glutamate</name>
        <dbReference type="ChEBI" id="CHEBI:58928"/>
    </ligand>
</feature>
<feature type="binding site" evidence="1">
    <location>
        <position position="328"/>
    </location>
    <ligand>
        <name>4-imidazolone-5-propanoate</name>
        <dbReference type="ChEBI" id="CHEBI:77893"/>
    </ligand>
</feature>
<keyword id="KW-0963">Cytoplasm</keyword>
<keyword id="KW-0369">Histidine metabolism</keyword>
<keyword id="KW-0378">Hydrolase</keyword>
<keyword id="KW-0408">Iron</keyword>
<keyword id="KW-0479">Metal-binding</keyword>
<keyword id="KW-1185">Reference proteome</keyword>
<keyword id="KW-0862">Zinc</keyword>